<proteinExistence type="evidence at transcript level"/>
<dbReference type="EC" id="2.1.1.355"/>
<dbReference type="EMBL" id="AJ851535">
    <property type="protein sequence ID" value="CAH65169.1"/>
    <property type="molecule type" value="mRNA"/>
</dbReference>
<dbReference type="RefSeq" id="NP_001026541.1">
    <property type="nucleotide sequence ID" value="NM_001031370.3"/>
</dbReference>
<dbReference type="SMR" id="Q5F3W5"/>
<dbReference type="FunCoup" id="Q5F3W5">
    <property type="interactions" value="1234"/>
</dbReference>
<dbReference type="STRING" id="9031.ENSGALP00000028525"/>
<dbReference type="PaxDb" id="9031-ENSGALP00000028525"/>
<dbReference type="Ensembl" id="ENSGALT00010014303.1">
    <property type="protein sequence ID" value="ENSGALP00010008397.1"/>
    <property type="gene ID" value="ENSGALG00010005979.1"/>
</dbReference>
<dbReference type="GeneID" id="426314"/>
<dbReference type="KEGG" id="gga:426314"/>
<dbReference type="CTD" id="79723"/>
<dbReference type="VEuPathDB" id="HostDB:geneid_426314"/>
<dbReference type="eggNOG" id="KOG1082">
    <property type="taxonomic scope" value="Eukaryota"/>
</dbReference>
<dbReference type="GeneTree" id="ENSGT00940000156788"/>
<dbReference type="HOGENOM" id="CLU_020840_8_0_1"/>
<dbReference type="InParanoid" id="Q5F3W5"/>
<dbReference type="OMA" id="YESNEFT"/>
<dbReference type="OrthoDB" id="308383at2759"/>
<dbReference type="PhylomeDB" id="Q5F3W5"/>
<dbReference type="TreeFam" id="TF106452"/>
<dbReference type="PRO" id="PR:Q5F3W5"/>
<dbReference type="Proteomes" id="UP000000539">
    <property type="component" value="Chromosome 1"/>
</dbReference>
<dbReference type="Bgee" id="ENSGALG00000013920">
    <property type="expression patterns" value="Expressed in spermatid and 14 other cell types or tissues"/>
</dbReference>
<dbReference type="GO" id="GO:0000785">
    <property type="term" value="C:chromatin"/>
    <property type="evidence" value="ECO:0007669"/>
    <property type="project" value="Ensembl"/>
</dbReference>
<dbReference type="GO" id="GO:0000775">
    <property type="term" value="C:chromosome, centromeric region"/>
    <property type="evidence" value="ECO:0007669"/>
    <property type="project" value="UniProtKB-SubCell"/>
</dbReference>
<dbReference type="GO" id="GO:0005634">
    <property type="term" value="C:nucleus"/>
    <property type="evidence" value="ECO:0000318"/>
    <property type="project" value="GO_Central"/>
</dbReference>
<dbReference type="GO" id="GO:0046974">
    <property type="term" value="F:histone H3K9 methyltransferase activity"/>
    <property type="evidence" value="ECO:0000318"/>
    <property type="project" value="GO_Central"/>
</dbReference>
<dbReference type="GO" id="GO:0140949">
    <property type="term" value="F:histone H3K9 trimethyltransferase activity"/>
    <property type="evidence" value="ECO:0007669"/>
    <property type="project" value="UniProtKB-EC"/>
</dbReference>
<dbReference type="GO" id="GO:1904047">
    <property type="term" value="F:S-adenosyl-L-methionine binding"/>
    <property type="evidence" value="ECO:0007669"/>
    <property type="project" value="Ensembl"/>
</dbReference>
<dbReference type="GO" id="GO:1990756">
    <property type="term" value="F:ubiquitin-like ligase-substrate adaptor activity"/>
    <property type="evidence" value="ECO:0007669"/>
    <property type="project" value="Ensembl"/>
</dbReference>
<dbReference type="GO" id="GO:0008270">
    <property type="term" value="F:zinc ion binding"/>
    <property type="evidence" value="ECO:0007669"/>
    <property type="project" value="Ensembl"/>
</dbReference>
<dbReference type="GO" id="GO:0030154">
    <property type="term" value="P:cell differentiation"/>
    <property type="evidence" value="ECO:0007669"/>
    <property type="project" value="UniProtKB-KW"/>
</dbReference>
<dbReference type="GO" id="GO:0071456">
    <property type="term" value="P:cellular response to hypoxia"/>
    <property type="evidence" value="ECO:0007669"/>
    <property type="project" value="Ensembl"/>
</dbReference>
<dbReference type="GO" id="GO:0044725">
    <property type="term" value="P:epigenetic programming in the zygotic pronuclei"/>
    <property type="evidence" value="ECO:0007669"/>
    <property type="project" value="Ensembl"/>
</dbReference>
<dbReference type="GO" id="GO:0032259">
    <property type="term" value="P:methylation"/>
    <property type="evidence" value="ECO:0007669"/>
    <property type="project" value="UniProtKB-KW"/>
</dbReference>
<dbReference type="GO" id="GO:0000122">
    <property type="term" value="P:negative regulation of transcription by RNA polymerase II"/>
    <property type="evidence" value="ECO:0007669"/>
    <property type="project" value="Ensembl"/>
</dbReference>
<dbReference type="CDD" id="cd18639">
    <property type="entry name" value="CD_SUV39H1_like"/>
    <property type="match status" value="1"/>
</dbReference>
<dbReference type="CDD" id="cd10532">
    <property type="entry name" value="SET_SUV39H2"/>
    <property type="match status" value="1"/>
</dbReference>
<dbReference type="FunFam" id="2.170.270.10:FF:000008">
    <property type="entry name" value="Histone-lysine N-methyltransferase"/>
    <property type="match status" value="1"/>
</dbReference>
<dbReference type="FunFam" id="2.40.50.40:FF:000016">
    <property type="entry name" value="Histone-lysine N-methyltransferase"/>
    <property type="match status" value="1"/>
</dbReference>
<dbReference type="Gene3D" id="2.40.50.40">
    <property type="match status" value="1"/>
</dbReference>
<dbReference type="Gene3D" id="2.170.270.10">
    <property type="entry name" value="SET domain"/>
    <property type="match status" value="1"/>
</dbReference>
<dbReference type="InterPro" id="IPR016197">
    <property type="entry name" value="Chromo-like_dom_sf"/>
</dbReference>
<dbReference type="InterPro" id="IPR000953">
    <property type="entry name" value="Chromo/chromo_shadow_dom"/>
</dbReference>
<dbReference type="InterPro" id="IPR023780">
    <property type="entry name" value="Chromo_domain"/>
</dbReference>
<dbReference type="InterPro" id="IPR023779">
    <property type="entry name" value="Chromodomain_CS"/>
</dbReference>
<dbReference type="InterPro" id="IPR011381">
    <property type="entry name" value="H3-K9_MeTrfase_SUV39H1/2-like"/>
</dbReference>
<dbReference type="InterPro" id="IPR050973">
    <property type="entry name" value="H3K9_Histone-Lys_N-MTase"/>
</dbReference>
<dbReference type="InterPro" id="IPR003616">
    <property type="entry name" value="Post-SET_dom"/>
</dbReference>
<dbReference type="InterPro" id="IPR007728">
    <property type="entry name" value="Pre-SET_dom"/>
</dbReference>
<dbReference type="InterPro" id="IPR001214">
    <property type="entry name" value="SET_dom"/>
</dbReference>
<dbReference type="InterPro" id="IPR046341">
    <property type="entry name" value="SET_dom_sf"/>
</dbReference>
<dbReference type="PANTHER" id="PTHR46223">
    <property type="entry name" value="HISTONE-LYSINE N-METHYLTRANSFERASE SUV39H"/>
    <property type="match status" value="1"/>
</dbReference>
<dbReference type="PANTHER" id="PTHR46223:SF2">
    <property type="entry name" value="HISTONE-LYSINE N-METHYLTRANSFERASE SUV39H2"/>
    <property type="match status" value="1"/>
</dbReference>
<dbReference type="Pfam" id="PF00385">
    <property type="entry name" value="Chromo"/>
    <property type="match status" value="1"/>
</dbReference>
<dbReference type="Pfam" id="PF05033">
    <property type="entry name" value="Pre-SET"/>
    <property type="match status" value="1"/>
</dbReference>
<dbReference type="Pfam" id="PF00856">
    <property type="entry name" value="SET"/>
    <property type="match status" value="1"/>
</dbReference>
<dbReference type="PIRSF" id="PIRSF009343">
    <property type="entry name" value="SUV39_SET"/>
    <property type="match status" value="1"/>
</dbReference>
<dbReference type="SMART" id="SM00298">
    <property type="entry name" value="CHROMO"/>
    <property type="match status" value="1"/>
</dbReference>
<dbReference type="SMART" id="SM00468">
    <property type="entry name" value="PreSET"/>
    <property type="match status" value="1"/>
</dbReference>
<dbReference type="SMART" id="SM00317">
    <property type="entry name" value="SET"/>
    <property type="match status" value="1"/>
</dbReference>
<dbReference type="SUPFAM" id="SSF54160">
    <property type="entry name" value="Chromo domain-like"/>
    <property type="match status" value="1"/>
</dbReference>
<dbReference type="SUPFAM" id="SSF82199">
    <property type="entry name" value="SET domain"/>
    <property type="match status" value="1"/>
</dbReference>
<dbReference type="PROSITE" id="PS00598">
    <property type="entry name" value="CHROMO_1"/>
    <property type="match status" value="1"/>
</dbReference>
<dbReference type="PROSITE" id="PS50013">
    <property type="entry name" value="CHROMO_2"/>
    <property type="match status" value="1"/>
</dbReference>
<dbReference type="PROSITE" id="PS50868">
    <property type="entry name" value="POST_SET"/>
    <property type="match status" value="1"/>
</dbReference>
<dbReference type="PROSITE" id="PS50867">
    <property type="entry name" value="PRE_SET"/>
    <property type="match status" value="1"/>
</dbReference>
<dbReference type="PROSITE" id="PS51579">
    <property type="entry name" value="SAM_MT43_SUVAR39_3"/>
    <property type="match status" value="1"/>
</dbReference>
<dbReference type="PROSITE" id="PS50280">
    <property type="entry name" value="SET"/>
    <property type="match status" value="1"/>
</dbReference>
<comment type="function">
    <text evidence="1">Histone methyltransferase that specifically trimethylates 'Lys-9' of histone H3 using monomethylated H3 'Lys-9' as substrate. H3 'Lys-9' trimethylation represents a specific tag for epigenetic transcriptional repression by recruiting HP1 (CBX1, CBX3 and/or CBX5) proteins to methylated histones. Mainly functions in heterochromatin regions, thereby playing a central role in the establishment of constitutive heterochromatin at pericentric and telomere regions. H3 'Lys-9' trimethylation is also required to direct DNA methylation at pericentric repeats. SUV39H1 is targeted to histone H3 via its interaction with RB1 and is involved in many processes (By similarity).</text>
</comment>
<comment type="catalytic activity">
    <reaction evidence="6">
        <text>L-lysyl(9)-[histone H3] + 3 S-adenosyl-L-methionine = N(6),N(6),N(6)-trimethyl-L-lysyl(9)-[histone H3] + 3 S-adenosyl-L-homocysteine + 3 H(+)</text>
        <dbReference type="Rhea" id="RHEA:60276"/>
        <dbReference type="Rhea" id="RHEA-COMP:15538"/>
        <dbReference type="Rhea" id="RHEA-COMP:15546"/>
        <dbReference type="ChEBI" id="CHEBI:15378"/>
        <dbReference type="ChEBI" id="CHEBI:29969"/>
        <dbReference type="ChEBI" id="CHEBI:57856"/>
        <dbReference type="ChEBI" id="CHEBI:59789"/>
        <dbReference type="ChEBI" id="CHEBI:61961"/>
        <dbReference type="EC" id="2.1.1.355"/>
    </reaction>
</comment>
<comment type="subcellular location">
    <subcellularLocation>
        <location evidence="1">Nucleus</location>
    </subcellularLocation>
    <subcellularLocation>
        <location evidence="1">Chromosome</location>
        <location evidence="1">Centromere</location>
    </subcellularLocation>
    <text evidence="1">Associates with centromeric constitutive heterochromatin.</text>
</comment>
<comment type="domain">
    <text evidence="1">Although the SET domain contains the active site of enzymatic activity, both pre-SET and post-SET domains are required for methyltransferase activity. The SET domain also participates in stable binding to heterochromatin (By similarity).</text>
</comment>
<comment type="domain">
    <text evidence="1">In the pre-SET domain, Cys residues bind 3 zinc ions that are arranged in a triangular cluster; some of these Cys residues contribute to the binding of two zinc ions within the cluster.</text>
</comment>
<comment type="similarity">
    <text evidence="6">Belongs to the class V-like SAM-binding methyltransferase superfamily. Histone-lysine methyltransferase family. Suvar3-9 subfamily.</text>
</comment>
<evidence type="ECO:0000250" key="1"/>
<evidence type="ECO:0000255" key="2">
    <source>
        <dbReference type="PROSITE-ProRule" id="PRU00053"/>
    </source>
</evidence>
<evidence type="ECO:0000255" key="3">
    <source>
        <dbReference type="PROSITE-ProRule" id="PRU00155"/>
    </source>
</evidence>
<evidence type="ECO:0000255" key="4">
    <source>
        <dbReference type="PROSITE-ProRule" id="PRU00157"/>
    </source>
</evidence>
<evidence type="ECO:0000255" key="5">
    <source>
        <dbReference type="PROSITE-ProRule" id="PRU00190"/>
    </source>
</evidence>
<evidence type="ECO:0000255" key="6">
    <source>
        <dbReference type="PROSITE-ProRule" id="PRU00912"/>
    </source>
</evidence>
<accession>Q5F3W5</accession>
<feature type="chain" id="PRO_0000281815" description="Histone-lysine N-methyltransferase SUV39H2">
    <location>
        <begin position="1"/>
        <end position="407"/>
    </location>
</feature>
<feature type="domain" description="Chromo" evidence="2">
    <location>
        <begin position="43"/>
        <end position="101"/>
    </location>
</feature>
<feature type="domain" description="Pre-SET" evidence="4">
    <location>
        <begin position="185"/>
        <end position="243"/>
    </location>
</feature>
<feature type="domain" description="SET" evidence="5">
    <location>
        <begin position="246"/>
        <end position="369"/>
    </location>
</feature>
<feature type="domain" description="Post-SET" evidence="3">
    <location>
        <begin position="391"/>
        <end position="407"/>
    </location>
</feature>
<feature type="binding site" evidence="1">
    <location>
        <position position="187"/>
    </location>
    <ligand>
        <name>Zn(2+)</name>
        <dbReference type="ChEBI" id="CHEBI:29105"/>
        <label>1</label>
    </ligand>
</feature>
<feature type="binding site" evidence="1">
    <location>
        <position position="187"/>
    </location>
    <ligand>
        <name>Zn(2+)</name>
        <dbReference type="ChEBI" id="CHEBI:29105"/>
        <label>2</label>
    </ligand>
</feature>
<feature type="binding site" evidence="1">
    <location>
        <position position="189"/>
    </location>
    <ligand>
        <name>Zn(2+)</name>
        <dbReference type="ChEBI" id="CHEBI:29105"/>
        <label>1</label>
    </ligand>
</feature>
<feature type="binding site" evidence="1">
    <location>
        <position position="192"/>
    </location>
    <ligand>
        <name>Zn(2+)</name>
        <dbReference type="ChEBI" id="CHEBI:29105"/>
        <label>1</label>
    </ligand>
</feature>
<feature type="binding site" evidence="1">
    <location>
        <position position="192"/>
    </location>
    <ligand>
        <name>Zn(2+)</name>
        <dbReference type="ChEBI" id="CHEBI:29105"/>
        <label>3</label>
    </ligand>
</feature>
<feature type="binding site" evidence="1">
    <location>
        <position position="197"/>
    </location>
    <ligand>
        <name>Zn(2+)</name>
        <dbReference type="ChEBI" id="CHEBI:29105"/>
        <label>1</label>
    </ligand>
</feature>
<feature type="binding site" evidence="1">
    <location>
        <position position="198"/>
    </location>
    <ligand>
        <name>Zn(2+)</name>
        <dbReference type="ChEBI" id="CHEBI:29105"/>
        <label>1</label>
    </ligand>
</feature>
<feature type="binding site" evidence="1">
    <location>
        <position position="198"/>
    </location>
    <ligand>
        <name>Zn(2+)</name>
        <dbReference type="ChEBI" id="CHEBI:29105"/>
        <label>2</label>
    </ligand>
</feature>
<feature type="binding site" evidence="1">
    <location>
        <position position="225"/>
    </location>
    <ligand>
        <name>Zn(2+)</name>
        <dbReference type="ChEBI" id="CHEBI:29105"/>
        <label>2</label>
    </ligand>
</feature>
<feature type="binding site" evidence="1">
    <location>
        <position position="225"/>
    </location>
    <ligand>
        <name>Zn(2+)</name>
        <dbReference type="ChEBI" id="CHEBI:29105"/>
        <label>3</label>
    </ligand>
</feature>
<feature type="binding site" evidence="1">
    <location>
        <position position="229"/>
    </location>
    <ligand>
        <name>Zn(2+)</name>
        <dbReference type="ChEBI" id="CHEBI:29105"/>
        <label>2</label>
    </ligand>
</feature>
<feature type="binding site" evidence="1">
    <location>
        <position position="231"/>
    </location>
    <ligand>
        <name>Zn(2+)</name>
        <dbReference type="ChEBI" id="CHEBI:29105"/>
        <label>3</label>
    </ligand>
</feature>
<feature type="binding site" evidence="1">
    <location>
        <position position="235"/>
    </location>
    <ligand>
        <name>Zn(2+)</name>
        <dbReference type="ChEBI" id="CHEBI:29105"/>
        <label>3</label>
    </ligand>
</feature>
<feature type="binding site" evidence="1">
    <location>
        <begin position="257"/>
        <end position="259"/>
    </location>
    <ligand>
        <name>S-adenosyl-L-methionine</name>
        <dbReference type="ChEBI" id="CHEBI:59789"/>
    </ligand>
</feature>
<feature type="binding site" evidence="5">
    <location>
        <position position="300"/>
    </location>
    <ligand>
        <name>S-adenosyl-L-methionine</name>
        <dbReference type="ChEBI" id="CHEBI:59789"/>
    </ligand>
</feature>
<feature type="binding site" evidence="1">
    <location>
        <begin position="326"/>
        <end position="327"/>
    </location>
    <ligand>
        <name>S-adenosyl-L-methionine</name>
        <dbReference type="ChEBI" id="CHEBI:59789"/>
    </ligand>
</feature>
<feature type="binding site" evidence="1">
    <location>
        <position position="329"/>
    </location>
    <ligand>
        <name>Zn(2+)</name>
        <dbReference type="ChEBI" id="CHEBI:29105"/>
        <label>4</label>
    </ligand>
</feature>
<feature type="binding site" evidence="1">
    <location>
        <position position="395"/>
    </location>
    <ligand>
        <name>Zn(2+)</name>
        <dbReference type="ChEBI" id="CHEBI:29105"/>
        <label>4</label>
    </ligand>
</feature>
<feature type="binding site" evidence="1">
    <location>
        <position position="397"/>
    </location>
    <ligand>
        <name>Zn(2+)</name>
        <dbReference type="ChEBI" id="CHEBI:29105"/>
        <label>4</label>
    </ligand>
</feature>
<feature type="binding site" evidence="1">
    <location>
        <position position="402"/>
    </location>
    <ligand>
        <name>Zn(2+)</name>
        <dbReference type="ChEBI" id="CHEBI:29105"/>
        <label>4</label>
    </ligand>
</feature>
<organism>
    <name type="scientific">Gallus gallus</name>
    <name type="common">Chicken</name>
    <dbReference type="NCBI Taxonomy" id="9031"/>
    <lineage>
        <taxon>Eukaryota</taxon>
        <taxon>Metazoa</taxon>
        <taxon>Chordata</taxon>
        <taxon>Craniata</taxon>
        <taxon>Vertebrata</taxon>
        <taxon>Euteleostomi</taxon>
        <taxon>Archelosauria</taxon>
        <taxon>Archosauria</taxon>
        <taxon>Dinosauria</taxon>
        <taxon>Saurischia</taxon>
        <taxon>Theropoda</taxon>
        <taxon>Coelurosauria</taxon>
        <taxon>Aves</taxon>
        <taxon>Neognathae</taxon>
        <taxon>Galloanserae</taxon>
        <taxon>Galliformes</taxon>
        <taxon>Phasianidae</taxon>
        <taxon>Phasianinae</taxon>
        <taxon>Gallus</taxon>
    </lineage>
</organism>
<name>SUV92_CHICK</name>
<sequence>MEGWRGAWYVPCLASHETLQELCRKENLRCKSIGITNKSLKSYEVEYLCDYKVEEGKEYYLVKWKGWPESSNTWEPQKNLKCPKLLENFLSDKDEYLSRMKEGRALKVRNSVKALKPAVADYIVKKAKQRIALQRWKEELNRKKNHKGMILVENTVDLEGPPIDFYYINEYKPAPGINVINGITTGCECSDCPAEKCCPKEAGFILAYNKQKKLKIQPGLPIYECNSFCRCGPDCPNRIVQKGTQYSLCIFRTNNGRGWGVKTLQKIKTNSFVMEYVGEVITSEEAERRGQFYDNQGNTYLFDLDYDSDEFTVDAARYGNVSHFVNHSCDPNLQVFNVFIDNLDLRLPRIALFSTRTIKAGEELTFDYQMKGSIDLTSDSADGLSSSRKRIRTVCKCGAVCCRGYLN</sequence>
<reference key="1">
    <citation type="journal article" date="2005" name="Genome Biol.">
        <title>Full-length cDNAs from chicken bursal lymphocytes to facilitate gene function analysis.</title>
        <authorList>
            <person name="Caldwell R.B."/>
            <person name="Kierzek A.M."/>
            <person name="Arakawa H."/>
            <person name="Bezzubov Y."/>
            <person name="Zaim J."/>
            <person name="Fiedler P."/>
            <person name="Kutter S."/>
            <person name="Blagodatski A."/>
            <person name="Kostovska D."/>
            <person name="Koter M."/>
            <person name="Plachy J."/>
            <person name="Carninci P."/>
            <person name="Hayashizaki Y."/>
            <person name="Buerstedde J.-M."/>
        </authorList>
    </citation>
    <scope>NUCLEOTIDE SEQUENCE [LARGE SCALE MRNA]</scope>
    <source>
        <strain>CB</strain>
        <tissue>Bursa of Fabricius</tissue>
    </source>
</reference>
<protein>
    <recommendedName>
        <fullName>Histone-lysine N-methyltransferase SUV39H2</fullName>
        <ecNumber>2.1.1.355</ecNumber>
    </recommendedName>
    <alternativeName>
        <fullName>Suppressor of variegation 3-9 homolog 2</fullName>
        <shortName>Su(var)3-9 homolog 2</shortName>
    </alternativeName>
</protein>
<keyword id="KW-0131">Cell cycle</keyword>
<keyword id="KW-0137">Centromere</keyword>
<keyword id="KW-0156">Chromatin regulator</keyword>
<keyword id="KW-0158">Chromosome</keyword>
<keyword id="KW-0221">Differentiation</keyword>
<keyword id="KW-0479">Metal-binding</keyword>
<keyword id="KW-0489">Methyltransferase</keyword>
<keyword id="KW-0539">Nucleus</keyword>
<keyword id="KW-1185">Reference proteome</keyword>
<keyword id="KW-0678">Repressor</keyword>
<keyword id="KW-0949">S-adenosyl-L-methionine</keyword>
<keyword id="KW-0804">Transcription</keyword>
<keyword id="KW-0805">Transcription regulation</keyword>
<keyword id="KW-0808">Transferase</keyword>
<keyword id="KW-0862">Zinc</keyword>
<gene>
    <name type="primary">SUV39H2</name>
    <name type="ORF">RCJMB04_5f7</name>
</gene>